<feature type="chain" id="PRO_0000348380" description="Glyoxylate/hydroxypyruvate reductase B">
    <location>
        <begin position="1"/>
        <end position="324"/>
    </location>
</feature>
<feature type="active site" evidence="1">
    <location>
        <position position="237"/>
    </location>
</feature>
<feature type="active site" evidence="1">
    <location>
        <position position="266"/>
    </location>
</feature>
<feature type="active site" description="Proton donor" evidence="1">
    <location>
        <position position="285"/>
    </location>
</feature>
<evidence type="ECO:0000255" key="1">
    <source>
        <dbReference type="HAMAP-Rule" id="MF_01667"/>
    </source>
</evidence>
<keyword id="KW-0963">Cytoplasm</keyword>
<keyword id="KW-0520">NAD</keyword>
<keyword id="KW-0521">NADP</keyword>
<keyword id="KW-0560">Oxidoreductase</keyword>
<keyword id="KW-1185">Reference proteome</keyword>
<name>GHRB_CROS8</name>
<dbReference type="EC" id="1.1.1.79" evidence="1"/>
<dbReference type="EC" id="1.1.1.81" evidence="1"/>
<dbReference type="EMBL" id="CP000783">
    <property type="protein sequence ID" value="ABU79356.1"/>
    <property type="molecule type" value="Genomic_DNA"/>
</dbReference>
<dbReference type="RefSeq" id="WP_004387605.1">
    <property type="nucleotide sequence ID" value="NC_009778.1"/>
</dbReference>
<dbReference type="SMR" id="A7MKR1"/>
<dbReference type="KEGG" id="esa:ESA_04175"/>
<dbReference type="HOGENOM" id="CLU_019796_1_2_6"/>
<dbReference type="Proteomes" id="UP000000260">
    <property type="component" value="Chromosome"/>
</dbReference>
<dbReference type="GO" id="GO:0005829">
    <property type="term" value="C:cytosol"/>
    <property type="evidence" value="ECO:0007669"/>
    <property type="project" value="TreeGrafter"/>
</dbReference>
<dbReference type="GO" id="GO:0005886">
    <property type="term" value="C:plasma membrane"/>
    <property type="evidence" value="ECO:0007669"/>
    <property type="project" value="UniProtKB-UniRule"/>
</dbReference>
<dbReference type="GO" id="GO:0030267">
    <property type="term" value="F:glyoxylate reductase (NADPH) activity"/>
    <property type="evidence" value="ECO:0007669"/>
    <property type="project" value="UniProtKB-UniRule"/>
</dbReference>
<dbReference type="GO" id="GO:0008465">
    <property type="term" value="F:hydroxypyruvate reductase (NADH) activity"/>
    <property type="evidence" value="ECO:0007669"/>
    <property type="project" value="RHEA"/>
</dbReference>
<dbReference type="GO" id="GO:0120509">
    <property type="term" value="F:hydroxypyruvate reductase (NADPH) activity"/>
    <property type="evidence" value="ECO:0007669"/>
    <property type="project" value="RHEA"/>
</dbReference>
<dbReference type="GO" id="GO:0051287">
    <property type="term" value="F:NAD binding"/>
    <property type="evidence" value="ECO:0007669"/>
    <property type="project" value="InterPro"/>
</dbReference>
<dbReference type="CDD" id="cd05301">
    <property type="entry name" value="GDH"/>
    <property type="match status" value="1"/>
</dbReference>
<dbReference type="FunFam" id="3.40.50.720:FF:000026">
    <property type="entry name" value="Glyoxylate/hydroxypyruvate reductase B"/>
    <property type="match status" value="1"/>
</dbReference>
<dbReference type="Gene3D" id="3.40.50.720">
    <property type="entry name" value="NAD(P)-binding Rossmann-like Domain"/>
    <property type="match status" value="2"/>
</dbReference>
<dbReference type="HAMAP" id="MF_01667">
    <property type="entry name" value="2_Hacid_dh_C_GhrB"/>
    <property type="match status" value="1"/>
</dbReference>
<dbReference type="InterPro" id="IPR050223">
    <property type="entry name" value="D-isomer_2-hydroxyacid_DH"/>
</dbReference>
<dbReference type="InterPro" id="IPR006139">
    <property type="entry name" value="D-isomer_2_OHA_DH_cat_dom"/>
</dbReference>
<dbReference type="InterPro" id="IPR029753">
    <property type="entry name" value="D-isomer_DH_CS"/>
</dbReference>
<dbReference type="InterPro" id="IPR006140">
    <property type="entry name" value="D-isomer_DH_NAD-bd"/>
</dbReference>
<dbReference type="InterPro" id="IPR023756">
    <property type="entry name" value="Glyo/OHPyrv_Rdtase_B"/>
</dbReference>
<dbReference type="InterPro" id="IPR036291">
    <property type="entry name" value="NAD(P)-bd_dom_sf"/>
</dbReference>
<dbReference type="NCBIfam" id="NF011938">
    <property type="entry name" value="PRK15409.1"/>
    <property type="match status" value="1"/>
</dbReference>
<dbReference type="PANTHER" id="PTHR10996">
    <property type="entry name" value="2-HYDROXYACID DEHYDROGENASE-RELATED"/>
    <property type="match status" value="1"/>
</dbReference>
<dbReference type="PANTHER" id="PTHR10996:SF283">
    <property type="entry name" value="GLYOXYLATE_HYDROXYPYRUVATE REDUCTASE B"/>
    <property type="match status" value="1"/>
</dbReference>
<dbReference type="Pfam" id="PF00389">
    <property type="entry name" value="2-Hacid_dh"/>
    <property type="match status" value="1"/>
</dbReference>
<dbReference type="Pfam" id="PF02826">
    <property type="entry name" value="2-Hacid_dh_C"/>
    <property type="match status" value="1"/>
</dbReference>
<dbReference type="SUPFAM" id="SSF52283">
    <property type="entry name" value="Formate/glycerate dehydrogenase catalytic domain-like"/>
    <property type="match status" value="1"/>
</dbReference>
<dbReference type="SUPFAM" id="SSF51735">
    <property type="entry name" value="NAD(P)-binding Rossmann-fold domains"/>
    <property type="match status" value="1"/>
</dbReference>
<dbReference type="PROSITE" id="PS00670">
    <property type="entry name" value="D_2_HYDROXYACID_DH_2"/>
    <property type="match status" value="1"/>
</dbReference>
<dbReference type="PROSITE" id="PS00671">
    <property type="entry name" value="D_2_HYDROXYACID_DH_3"/>
    <property type="match status" value="1"/>
</dbReference>
<protein>
    <recommendedName>
        <fullName evidence="1">Glyoxylate/hydroxypyruvate reductase B</fullName>
        <ecNumber evidence="1">1.1.1.79</ecNumber>
        <ecNumber evidence="1">1.1.1.81</ecNumber>
    </recommendedName>
</protein>
<accession>A7MKR1</accession>
<proteinExistence type="inferred from homology"/>
<organism>
    <name type="scientific">Cronobacter sakazakii (strain ATCC BAA-894)</name>
    <name type="common">Enterobacter sakazakii</name>
    <dbReference type="NCBI Taxonomy" id="290339"/>
    <lineage>
        <taxon>Bacteria</taxon>
        <taxon>Pseudomonadati</taxon>
        <taxon>Pseudomonadota</taxon>
        <taxon>Gammaproteobacteria</taxon>
        <taxon>Enterobacterales</taxon>
        <taxon>Enterobacteriaceae</taxon>
        <taxon>Cronobacter</taxon>
    </lineage>
</organism>
<gene>
    <name evidence="1" type="primary">ghrB</name>
    <name type="ordered locus">ESA_04175</name>
</gene>
<sequence>MKPSVILYKSLPDDLLARLESHFNVTRVPDLSPETIEAHASAFSEAQGLLGSSEKVDAALLEKMPALRAASTVSVGYDNFDVDALSAKKIALMHTPTVLTETVADTLMTLVLTTARRALEVAERVKAGEWTGSIGPDWFGCDVHHKTLGIVGMGRIGLALAQRAHFGFNMPILYNARRHHSEAEERFNARYCDLDTLLAESDFVCVILPLTDETHHMIGAEQFRKMKKSAIFINAGRGPVVDENALIAALQSGEIHAAGLDVFEQEPLSKDSPLLTMKNVVALPHIGSATHETRYNMAACAVDNLINALNGDVSQNCVNPKAVK</sequence>
<comment type="function">
    <text evidence="1">Catalyzes the NADPH-dependent reduction of glyoxylate and hydroxypyruvate into glycolate and glycerate, respectively.</text>
</comment>
<comment type="catalytic activity">
    <reaction evidence="1">
        <text>glycolate + NADP(+) = glyoxylate + NADPH + H(+)</text>
        <dbReference type="Rhea" id="RHEA:10992"/>
        <dbReference type="ChEBI" id="CHEBI:15378"/>
        <dbReference type="ChEBI" id="CHEBI:29805"/>
        <dbReference type="ChEBI" id="CHEBI:36655"/>
        <dbReference type="ChEBI" id="CHEBI:57783"/>
        <dbReference type="ChEBI" id="CHEBI:58349"/>
        <dbReference type="EC" id="1.1.1.79"/>
    </reaction>
</comment>
<comment type="catalytic activity">
    <reaction evidence="1">
        <text>(R)-glycerate + NAD(+) = 3-hydroxypyruvate + NADH + H(+)</text>
        <dbReference type="Rhea" id="RHEA:17905"/>
        <dbReference type="ChEBI" id="CHEBI:15378"/>
        <dbReference type="ChEBI" id="CHEBI:16659"/>
        <dbReference type="ChEBI" id="CHEBI:17180"/>
        <dbReference type="ChEBI" id="CHEBI:57540"/>
        <dbReference type="ChEBI" id="CHEBI:57945"/>
        <dbReference type="EC" id="1.1.1.81"/>
    </reaction>
</comment>
<comment type="catalytic activity">
    <reaction evidence="1">
        <text>(R)-glycerate + NADP(+) = 3-hydroxypyruvate + NADPH + H(+)</text>
        <dbReference type="Rhea" id="RHEA:18657"/>
        <dbReference type="ChEBI" id="CHEBI:15378"/>
        <dbReference type="ChEBI" id="CHEBI:16659"/>
        <dbReference type="ChEBI" id="CHEBI:17180"/>
        <dbReference type="ChEBI" id="CHEBI:57783"/>
        <dbReference type="ChEBI" id="CHEBI:58349"/>
        <dbReference type="EC" id="1.1.1.81"/>
    </reaction>
</comment>
<comment type="subunit">
    <text evidence="1">Homodimer.</text>
</comment>
<comment type="subcellular location">
    <subcellularLocation>
        <location evidence="1">Cytoplasm</location>
    </subcellularLocation>
</comment>
<comment type="similarity">
    <text evidence="1">Belongs to the D-isomer specific 2-hydroxyacid dehydrogenase family. GhrB subfamily.</text>
</comment>
<reference key="1">
    <citation type="journal article" date="2010" name="PLoS ONE">
        <title>Genome sequence of Cronobacter sakazakii BAA-894 and comparative genomic hybridization analysis with other Cronobacter species.</title>
        <authorList>
            <person name="Kucerova E."/>
            <person name="Clifton S.W."/>
            <person name="Xia X.Q."/>
            <person name="Long F."/>
            <person name="Porwollik S."/>
            <person name="Fulton L."/>
            <person name="Fronick C."/>
            <person name="Minx P."/>
            <person name="Kyung K."/>
            <person name="Warren W."/>
            <person name="Fulton R."/>
            <person name="Feng D."/>
            <person name="Wollam A."/>
            <person name="Shah N."/>
            <person name="Bhonagiri V."/>
            <person name="Nash W.E."/>
            <person name="Hallsworth-Pepin K."/>
            <person name="Wilson R.K."/>
            <person name="McClelland M."/>
            <person name="Forsythe S.J."/>
        </authorList>
    </citation>
    <scope>NUCLEOTIDE SEQUENCE [LARGE SCALE GENOMIC DNA]</scope>
    <source>
        <strain>ATCC BAA-894</strain>
    </source>
</reference>